<comment type="function">
    <text evidence="1">Putative tyrosine recombinase. Not involved in the cutting and rejoining of the recombining DNA molecules on dif(SL) site.</text>
</comment>
<comment type="interaction">
    <interactant intactId="EBI-2207382">
        <id>P0A4S9</id>
    </interactant>
    <interactant intactId="EBI-2206949">
        <id>Q97NV3</id>
        <label>groES</label>
    </interactant>
    <organismsDiffer>false</organismsDiffer>
    <experiments>2</experiments>
</comment>
<comment type="interaction">
    <interactant intactId="EBI-2207382">
        <id>P0A4S9</id>
    </interactant>
    <interactant intactId="EBI-2207177">
        <id>Q97QV8</id>
        <label>rex</label>
    </interactant>
    <organismsDiffer>false</organismsDiffer>
    <experiments>2</experiments>
</comment>
<comment type="interaction">
    <interactant intactId="EBI-2207382">
        <id>P0A4S9</id>
    </interactant>
    <interactant intactId="EBI-2207093">
        <id>P67049</id>
        <label>thyA</label>
    </interactant>
    <organismsDiffer>false</organismsDiffer>
    <experiments>2</experiments>
</comment>
<comment type="subcellular location">
    <subcellularLocation>
        <location evidence="1">Cytoplasm</location>
    </subcellularLocation>
</comment>
<comment type="similarity">
    <text evidence="1">Belongs to the 'phage' integrase family. XerD-like subfamily.</text>
</comment>
<comment type="sequence caution" evidence="4">
    <conflict type="erroneous initiation">
        <sequence resource="EMBL-CDS" id="AAK75949"/>
    </conflict>
</comment>
<dbReference type="EMBL" id="AE005672">
    <property type="protein sequence ID" value="AAK75949.1"/>
    <property type="status" value="ALT_INIT"/>
    <property type="molecule type" value="Genomic_DNA"/>
</dbReference>
<dbReference type="PIR" id="D95219">
    <property type="entry name" value="D95219"/>
</dbReference>
<dbReference type="SMR" id="P0A4S9"/>
<dbReference type="IntAct" id="P0A4S9">
    <property type="interactions" value="3"/>
</dbReference>
<dbReference type="PaxDb" id="170187-SP_1877"/>
<dbReference type="EnsemblBacteria" id="AAK75949">
    <property type="protein sequence ID" value="AAK75949"/>
    <property type="gene ID" value="SP_1877"/>
</dbReference>
<dbReference type="KEGG" id="spn:SP_1877"/>
<dbReference type="eggNOG" id="COG4974">
    <property type="taxonomic scope" value="Bacteria"/>
</dbReference>
<dbReference type="PhylomeDB" id="P0A4S9"/>
<dbReference type="Proteomes" id="UP000000585">
    <property type="component" value="Chromosome"/>
</dbReference>
<dbReference type="GO" id="GO:0005737">
    <property type="term" value="C:cytoplasm"/>
    <property type="evidence" value="ECO:0007669"/>
    <property type="project" value="UniProtKB-SubCell"/>
</dbReference>
<dbReference type="GO" id="GO:0003677">
    <property type="term" value="F:DNA binding"/>
    <property type="evidence" value="ECO:0007669"/>
    <property type="project" value="UniProtKB-KW"/>
</dbReference>
<dbReference type="GO" id="GO:0009037">
    <property type="term" value="F:tyrosine-based site-specific recombinase activity"/>
    <property type="evidence" value="ECO:0007669"/>
    <property type="project" value="UniProtKB-UniRule"/>
</dbReference>
<dbReference type="GO" id="GO:0006313">
    <property type="term" value="P:DNA transposition"/>
    <property type="evidence" value="ECO:0007669"/>
    <property type="project" value="UniProtKB-UniRule"/>
</dbReference>
<dbReference type="CDD" id="cd01190">
    <property type="entry name" value="INT_StrepXerD_C_like"/>
    <property type="match status" value="1"/>
</dbReference>
<dbReference type="Gene3D" id="1.10.150.130">
    <property type="match status" value="1"/>
</dbReference>
<dbReference type="Gene3D" id="1.10.443.10">
    <property type="entry name" value="Intergrase catalytic core"/>
    <property type="match status" value="1"/>
</dbReference>
<dbReference type="HAMAP" id="MF_01817">
    <property type="entry name" value="Recomb_XerD_like"/>
    <property type="match status" value="1"/>
</dbReference>
<dbReference type="InterPro" id="IPR044068">
    <property type="entry name" value="CB"/>
</dbReference>
<dbReference type="InterPro" id="IPR011010">
    <property type="entry name" value="DNA_brk_join_enz"/>
</dbReference>
<dbReference type="InterPro" id="IPR013762">
    <property type="entry name" value="Integrase-like_cat_sf"/>
</dbReference>
<dbReference type="InterPro" id="IPR002104">
    <property type="entry name" value="Integrase_catalytic"/>
</dbReference>
<dbReference type="InterPro" id="IPR010998">
    <property type="entry name" value="Integrase_recombinase_N"/>
</dbReference>
<dbReference type="InterPro" id="IPR004107">
    <property type="entry name" value="Integrase_SAM-like_N"/>
</dbReference>
<dbReference type="InterPro" id="IPR020876">
    <property type="entry name" value="Tyrosine_recombinase_XerD-like"/>
</dbReference>
<dbReference type="NCBIfam" id="NF002685">
    <property type="entry name" value="PRK02436.1"/>
    <property type="match status" value="1"/>
</dbReference>
<dbReference type="Pfam" id="PF02899">
    <property type="entry name" value="Phage_int_SAM_1"/>
    <property type="match status" value="1"/>
</dbReference>
<dbReference type="Pfam" id="PF00589">
    <property type="entry name" value="Phage_integrase"/>
    <property type="match status" value="1"/>
</dbReference>
<dbReference type="SUPFAM" id="SSF56349">
    <property type="entry name" value="DNA breaking-rejoining enzymes"/>
    <property type="match status" value="1"/>
</dbReference>
<dbReference type="PROSITE" id="PS51900">
    <property type="entry name" value="CB"/>
    <property type="match status" value="1"/>
</dbReference>
<dbReference type="PROSITE" id="PS51898">
    <property type="entry name" value="TYR_RECOMBINASE"/>
    <property type="match status" value="1"/>
</dbReference>
<protein>
    <recommendedName>
        <fullName evidence="1">Tyrosine recombinase XerD-like</fullName>
    </recommendedName>
</protein>
<keyword id="KW-0963">Cytoplasm</keyword>
<keyword id="KW-0229">DNA integration</keyword>
<keyword id="KW-0233">DNA recombination</keyword>
<keyword id="KW-0238">DNA-binding</keyword>
<keyword id="KW-1185">Reference proteome</keyword>
<gene>
    <name type="ordered locus">SP_1877</name>
</gene>
<sequence>MRDRISAFLEEKQGLSVNSKQSYKYDLEQFLDMVGERISETSLKIYQAQLANLKISAQKRKISACNQFLYFLYQKGEVDSFYRLELAKQAEKKTEKPEILYLDSFWQESDHPEGRLLALLILEMGLLPSEILAIKVADINLDFQVLRISKASQQRIVTIPTALLSELEPLMGQTYLFERGEKPYSRQWAFRQLESFVKEKGFPSLSAQVLREQFILRQIENKVDLYEIAKKLGLKTVLTLEKYR</sequence>
<name>XERDL_STRPN</name>
<accession>P0A4S9</accession>
<accession>Q9EUQ8</accession>
<reference key="1">
    <citation type="journal article" date="2001" name="Science">
        <title>Complete genome sequence of a virulent isolate of Streptococcus pneumoniae.</title>
        <authorList>
            <person name="Tettelin H."/>
            <person name="Nelson K.E."/>
            <person name="Paulsen I.T."/>
            <person name="Eisen J.A."/>
            <person name="Read T.D."/>
            <person name="Peterson S.N."/>
            <person name="Heidelberg J.F."/>
            <person name="DeBoy R.T."/>
            <person name="Haft D.H."/>
            <person name="Dodson R.J."/>
            <person name="Durkin A.S."/>
            <person name="Gwinn M.L."/>
            <person name="Kolonay J.F."/>
            <person name="Nelson W.C."/>
            <person name="Peterson J.D."/>
            <person name="Umayam L.A."/>
            <person name="White O."/>
            <person name="Salzberg S.L."/>
            <person name="Lewis M.R."/>
            <person name="Radune D."/>
            <person name="Holtzapple E.K."/>
            <person name="Khouri H.M."/>
            <person name="Wolf A.M."/>
            <person name="Utterback T.R."/>
            <person name="Hansen C.L."/>
            <person name="McDonald L.A."/>
            <person name="Feldblyum T.V."/>
            <person name="Angiuoli S.V."/>
            <person name="Dickinson T."/>
            <person name="Hickey E.K."/>
            <person name="Holt I.E."/>
            <person name="Loftus B.J."/>
            <person name="Yang F."/>
            <person name="Smith H.O."/>
            <person name="Venter J.C."/>
            <person name="Dougherty B.A."/>
            <person name="Morrison D.A."/>
            <person name="Hollingshead S.K."/>
            <person name="Fraser C.M."/>
        </authorList>
    </citation>
    <scope>NUCLEOTIDE SEQUENCE [LARGE SCALE GENOMIC DNA]</scope>
    <source>
        <strain>ATCC BAA-334 / TIGR4</strain>
    </source>
</reference>
<feature type="chain" id="PRO_0000095440" description="Tyrosine recombinase XerD-like">
    <location>
        <begin position="1"/>
        <end position="244"/>
    </location>
</feature>
<feature type="domain" description="Core-binding (CB)" evidence="3">
    <location>
        <begin position="1"/>
        <end position="73"/>
    </location>
</feature>
<feature type="domain" description="Tyr recombinase" evidence="2">
    <location>
        <begin position="90"/>
        <end position="244"/>
    </location>
</feature>
<feature type="active site" evidence="2">
    <location>
        <position position="150"/>
    </location>
</feature>
<feature type="active site" evidence="2">
    <location>
        <position position="211"/>
    </location>
</feature>
<feature type="active site" description="O-(3'-phospho-DNA)-tyrosine intermediate" evidence="2">
    <location>
        <position position="243"/>
    </location>
</feature>
<evidence type="ECO:0000255" key="1">
    <source>
        <dbReference type="HAMAP-Rule" id="MF_01817"/>
    </source>
</evidence>
<evidence type="ECO:0000255" key="2">
    <source>
        <dbReference type="PROSITE-ProRule" id="PRU01246"/>
    </source>
</evidence>
<evidence type="ECO:0000255" key="3">
    <source>
        <dbReference type="PROSITE-ProRule" id="PRU01248"/>
    </source>
</evidence>
<evidence type="ECO:0000305" key="4"/>
<proteinExistence type="evidence at protein level"/>
<organism>
    <name type="scientific">Streptococcus pneumoniae serotype 4 (strain ATCC BAA-334 / TIGR4)</name>
    <dbReference type="NCBI Taxonomy" id="170187"/>
    <lineage>
        <taxon>Bacteria</taxon>
        <taxon>Bacillati</taxon>
        <taxon>Bacillota</taxon>
        <taxon>Bacilli</taxon>
        <taxon>Lactobacillales</taxon>
        <taxon>Streptococcaceae</taxon>
        <taxon>Streptococcus</taxon>
    </lineage>
</organism>